<proteinExistence type="inferred from homology"/>
<accession>Q3IIN7</accession>
<evidence type="ECO:0000255" key="1">
    <source>
        <dbReference type="HAMAP-Rule" id="MF_00044"/>
    </source>
</evidence>
<gene>
    <name evidence="1" type="primary">aspS</name>
    <name type="ordered locus">PSHAa1938</name>
</gene>
<feature type="chain" id="PRO_0000235544" description="Aspartate--tRNA ligase">
    <location>
        <begin position="1"/>
        <end position="592"/>
    </location>
</feature>
<feature type="region of interest" description="Aspartate" evidence="1">
    <location>
        <begin position="195"/>
        <end position="198"/>
    </location>
</feature>
<feature type="binding site" evidence="1">
    <location>
        <position position="171"/>
    </location>
    <ligand>
        <name>L-aspartate</name>
        <dbReference type="ChEBI" id="CHEBI:29991"/>
    </ligand>
</feature>
<feature type="binding site" evidence="1">
    <location>
        <begin position="217"/>
        <end position="219"/>
    </location>
    <ligand>
        <name>ATP</name>
        <dbReference type="ChEBI" id="CHEBI:30616"/>
    </ligand>
</feature>
<feature type="binding site" evidence="1">
    <location>
        <position position="217"/>
    </location>
    <ligand>
        <name>L-aspartate</name>
        <dbReference type="ChEBI" id="CHEBI:29991"/>
    </ligand>
</feature>
<feature type="binding site" evidence="1">
    <location>
        <position position="226"/>
    </location>
    <ligand>
        <name>ATP</name>
        <dbReference type="ChEBI" id="CHEBI:30616"/>
    </ligand>
</feature>
<feature type="binding site" evidence="1">
    <location>
        <position position="448"/>
    </location>
    <ligand>
        <name>L-aspartate</name>
        <dbReference type="ChEBI" id="CHEBI:29991"/>
    </ligand>
</feature>
<feature type="binding site" evidence="1">
    <location>
        <position position="482"/>
    </location>
    <ligand>
        <name>ATP</name>
        <dbReference type="ChEBI" id="CHEBI:30616"/>
    </ligand>
</feature>
<feature type="binding site" evidence="1">
    <location>
        <position position="489"/>
    </location>
    <ligand>
        <name>L-aspartate</name>
        <dbReference type="ChEBI" id="CHEBI:29991"/>
    </ligand>
</feature>
<feature type="binding site" evidence="1">
    <location>
        <begin position="534"/>
        <end position="537"/>
    </location>
    <ligand>
        <name>ATP</name>
        <dbReference type="ChEBI" id="CHEBI:30616"/>
    </ligand>
</feature>
<protein>
    <recommendedName>
        <fullName evidence="1">Aspartate--tRNA ligase</fullName>
        <ecNumber evidence="1">6.1.1.12</ecNumber>
    </recommendedName>
    <alternativeName>
        <fullName evidence="1">Aspartyl-tRNA synthetase</fullName>
        <shortName evidence="1">AspRS</shortName>
    </alternativeName>
</protein>
<keyword id="KW-0030">Aminoacyl-tRNA synthetase</keyword>
<keyword id="KW-0067">ATP-binding</keyword>
<keyword id="KW-0963">Cytoplasm</keyword>
<keyword id="KW-0436">Ligase</keyword>
<keyword id="KW-0547">Nucleotide-binding</keyword>
<keyword id="KW-0648">Protein biosynthesis</keyword>
<keyword id="KW-1185">Reference proteome</keyword>
<name>SYD_PSET1</name>
<reference key="1">
    <citation type="journal article" date="2005" name="Genome Res.">
        <title>Coping with cold: the genome of the versatile marine Antarctica bacterium Pseudoalteromonas haloplanktis TAC125.</title>
        <authorList>
            <person name="Medigue C."/>
            <person name="Krin E."/>
            <person name="Pascal G."/>
            <person name="Barbe V."/>
            <person name="Bernsel A."/>
            <person name="Bertin P.N."/>
            <person name="Cheung F."/>
            <person name="Cruveiller S."/>
            <person name="D'Amico S."/>
            <person name="Duilio A."/>
            <person name="Fang G."/>
            <person name="Feller G."/>
            <person name="Ho C."/>
            <person name="Mangenot S."/>
            <person name="Marino G."/>
            <person name="Nilsson J."/>
            <person name="Parrilli E."/>
            <person name="Rocha E.P.C."/>
            <person name="Rouy Z."/>
            <person name="Sekowska A."/>
            <person name="Tutino M.L."/>
            <person name="Vallenet D."/>
            <person name="von Heijne G."/>
            <person name="Danchin A."/>
        </authorList>
    </citation>
    <scope>NUCLEOTIDE SEQUENCE [LARGE SCALE GENOMIC DNA]</scope>
    <source>
        <strain>TAC 125</strain>
    </source>
</reference>
<dbReference type="EC" id="6.1.1.12" evidence="1"/>
<dbReference type="EMBL" id="CR954246">
    <property type="protein sequence ID" value="CAI87002.1"/>
    <property type="molecule type" value="Genomic_DNA"/>
</dbReference>
<dbReference type="SMR" id="Q3IIN7"/>
<dbReference type="STRING" id="326442.PSHAa1938"/>
<dbReference type="KEGG" id="pha:PSHAa1938"/>
<dbReference type="PATRIC" id="fig|326442.8.peg.1876"/>
<dbReference type="eggNOG" id="COG0173">
    <property type="taxonomic scope" value="Bacteria"/>
</dbReference>
<dbReference type="HOGENOM" id="CLU_014330_3_2_6"/>
<dbReference type="BioCyc" id="PHAL326442:PSHA_RS09570-MONOMER"/>
<dbReference type="Proteomes" id="UP000006843">
    <property type="component" value="Chromosome I"/>
</dbReference>
<dbReference type="GO" id="GO:0005737">
    <property type="term" value="C:cytoplasm"/>
    <property type="evidence" value="ECO:0007669"/>
    <property type="project" value="UniProtKB-SubCell"/>
</dbReference>
<dbReference type="GO" id="GO:0004815">
    <property type="term" value="F:aspartate-tRNA ligase activity"/>
    <property type="evidence" value="ECO:0007669"/>
    <property type="project" value="UniProtKB-UniRule"/>
</dbReference>
<dbReference type="GO" id="GO:0005524">
    <property type="term" value="F:ATP binding"/>
    <property type="evidence" value="ECO:0007669"/>
    <property type="project" value="UniProtKB-UniRule"/>
</dbReference>
<dbReference type="GO" id="GO:0003676">
    <property type="term" value="F:nucleic acid binding"/>
    <property type="evidence" value="ECO:0007669"/>
    <property type="project" value="InterPro"/>
</dbReference>
<dbReference type="GO" id="GO:0006422">
    <property type="term" value="P:aspartyl-tRNA aminoacylation"/>
    <property type="evidence" value="ECO:0007669"/>
    <property type="project" value="UniProtKB-UniRule"/>
</dbReference>
<dbReference type="CDD" id="cd00777">
    <property type="entry name" value="AspRS_core"/>
    <property type="match status" value="1"/>
</dbReference>
<dbReference type="CDD" id="cd04317">
    <property type="entry name" value="EcAspRS_like_N"/>
    <property type="match status" value="1"/>
</dbReference>
<dbReference type="Gene3D" id="3.30.930.10">
    <property type="entry name" value="Bira Bifunctional Protein, Domain 2"/>
    <property type="match status" value="1"/>
</dbReference>
<dbReference type="Gene3D" id="3.30.1360.30">
    <property type="entry name" value="GAD-like domain"/>
    <property type="match status" value="1"/>
</dbReference>
<dbReference type="Gene3D" id="2.40.50.140">
    <property type="entry name" value="Nucleic acid-binding proteins"/>
    <property type="match status" value="1"/>
</dbReference>
<dbReference type="HAMAP" id="MF_00044">
    <property type="entry name" value="Asp_tRNA_synth_type1"/>
    <property type="match status" value="1"/>
</dbReference>
<dbReference type="InterPro" id="IPR004364">
    <property type="entry name" value="Aa-tRNA-synt_II"/>
</dbReference>
<dbReference type="InterPro" id="IPR006195">
    <property type="entry name" value="aa-tRNA-synth_II"/>
</dbReference>
<dbReference type="InterPro" id="IPR045864">
    <property type="entry name" value="aa-tRNA-synth_II/BPL/LPL"/>
</dbReference>
<dbReference type="InterPro" id="IPR004524">
    <property type="entry name" value="Asp-tRNA-ligase_1"/>
</dbReference>
<dbReference type="InterPro" id="IPR047089">
    <property type="entry name" value="Asp-tRNA-ligase_1_N"/>
</dbReference>
<dbReference type="InterPro" id="IPR002312">
    <property type="entry name" value="Asp/Asn-tRNA-synth_IIb"/>
</dbReference>
<dbReference type="InterPro" id="IPR047090">
    <property type="entry name" value="AspRS_core"/>
</dbReference>
<dbReference type="InterPro" id="IPR004115">
    <property type="entry name" value="GAD-like_sf"/>
</dbReference>
<dbReference type="InterPro" id="IPR029351">
    <property type="entry name" value="GAD_dom"/>
</dbReference>
<dbReference type="InterPro" id="IPR012340">
    <property type="entry name" value="NA-bd_OB-fold"/>
</dbReference>
<dbReference type="InterPro" id="IPR004365">
    <property type="entry name" value="NA-bd_OB_tRNA"/>
</dbReference>
<dbReference type="NCBIfam" id="TIGR00459">
    <property type="entry name" value="aspS_bact"/>
    <property type="match status" value="1"/>
</dbReference>
<dbReference type="NCBIfam" id="NF001750">
    <property type="entry name" value="PRK00476.1"/>
    <property type="match status" value="1"/>
</dbReference>
<dbReference type="PANTHER" id="PTHR22594:SF5">
    <property type="entry name" value="ASPARTATE--TRNA LIGASE, MITOCHONDRIAL"/>
    <property type="match status" value="1"/>
</dbReference>
<dbReference type="PANTHER" id="PTHR22594">
    <property type="entry name" value="ASPARTYL/LYSYL-TRNA SYNTHETASE"/>
    <property type="match status" value="1"/>
</dbReference>
<dbReference type="Pfam" id="PF02938">
    <property type="entry name" value="GAD"/>
    <property type="match status" value="1"/>
</dbReference>
<dbReference type="Pfam" id="PF00152">
    <property type="entry name" value="tRNA-synt_2"/>
    <property type="match status" value="1"/>
</dbReference>
<dbReference type="Pfam" id="PF01336">
    <property type="entry name" value="tRNA_anti-codon"/>
    <property type="match status" value="1"/>
</dbReference>
<dbReference type="PRINTS" id="PR01042">
    <property type="entry name" value="TRNASYNTHASP"/>
</dbReference>
<dbReference type="SUPFAM" id="SSF55681">
    <property type="entry name" value="Class II aaRS and biotin synthetases"/>
    <property type="match status" value="1"/>
</dbReference>
<dbReference type="SUPFAM" id="SSF55261">
    <property type="entry name" value="GAD domain-like"/>
    <property type="match status" value="1"/>
</dbReference>
<dbReference type="SUPFAM" id="SSF50249">
    <property type="entry name" value="Nucleic acid-binding proteins"/>
    <property type="match status" value="1"/>
</dbReference>
<dbReference type="PROSITE" id="PS50862">
    <property type="entry name" value="AA_TRNA_LIGASE_II"/>
    <property type="match status" value="1"/>
</dbReference>
<comment type="function">
    <text evidence="1">Catalyzes the attachment of L-aspartate to tRNA(Asp) in a two-step reaction: L-aspartate is first activated by ATP to form Asp-AMP and then transferred to the acceptor end of tRNA(Asp).</text>
</comment>
<comment type="catalytic activity">
    <reaction evidence="1">
        <text>tRNA(Asp) + L-aspartate + ATP = L-aspartyl-tRNA(Asp) + AMP + diphosphate</text>
        <dbReference type="Rhea" id="RHEA:19649"/>
        <dbReference type="Rhea" id="RHEA-COMP:9660"/>
        <dbReference type="Rhea" id="RHEA-COMP:9678"/>
        <dbReference type="ChEBI" id="CHEBI:29991"/>
        <dbReference type="ChEBI" id="CHEBI:30616"/>
        <dbReference type="ChEBI" id="CHEBI:33019"/>
        <dbReference type="ChEBI" id="CHEBI:78442"/>
        <dbReference type="ChEBI" id="CHEBI:78516"/>
        <dbReference type="ChEBI" id="CHEBI:456215"/>
        <dbReference type="EC" id="6.1.1.12"/>
    </reaction>
</comment>
<comment type="subunit">
    <text evidence="1">Homodimer.</text>
</comment>
<comment type="subcellular location">
    <subcellularLocation>
        <location evidence="1">Cytoplasm</location>
    </subcellularLocation>
</comment>
<comment type="similarity">
    <text evidence="1">Belongs to the class-II aminoacyl-tRNA synthetase family. Type 1 subfamily.</text>
</comment>
<sequence>MRSIYCGQLNKTHVDQEVELCGWINKRRDLGGLIFVDLRDREGLVQVVFDSDIEELMSSANTLRQEFCVQLKGIVRARPDSQVNKDMPTGEIEILGTELNIINRSEPLPLDFNQVNSEERRLKYRYLDLRRLEMSDRIKLRAKASSFVRRFLDENGFLDIETPVLTKATPEGARDYLVPSRVHKGSFYALPQSPQLFKQLLMMSGFDRYYQIVKCFRDEDLRADRQPEFTQIDIETSFMSSDQVRGMTEKMIREMWQTLLNVDLGDFPIMPYSEAMSLYGSDKPDLRNPMKLVDIADLVKDVEFNVFSGPANDEKGRVAVLTVPGGAKLSRKQLDDYTKFIGIYGAKGMAWMKVNDHTAGAEGVQSPVAKFLTADVITQLLERTNAQSGDIILFGADKRNTVNEAMGALRVKIGIDLEITNLDSWAPLWVVDFPMFEEDDEGTLHAVHHPFTAPKDMSASELEANPAAAISDAYDMVLNGYEVGGGSVRIHNADMQEAAFRILGINEQEQQDKFGFLLDALKYGTPPHAGLAFGLDRLAMLLCGTDNIRDVIAFPKTTQASCLLTNAPSKPNADSLAELAISVVEKAVLSAE</sequence>
<organism>
    <name type="scientific">Pseudoalteromonas translucida (strain TAC 125)</name>
    <dbReference type="NCBI Taxonomy" id="326442"/>
    <lineage>
        <taxon>Bacteria</taxon>
        <taxon>Pseudomonadati</taxon>
        <taxon>Pseudomonadota</taxon>
        <taxon>Gammaproteobacteria</taxon>
        <taxon>Alteromonadales</taxon>
        <taxon>Pseudoalteromonadaceae</taxon>
        <taxon>Pseudoalteromonas</taxon>
    </lineage>
</organism>